<name>MUTS_ERWT9</name>
<protein>
    <recommendedName>
        <fullName evidence="1">DNA mismatch repair protein MutS</fullName>
    </recommendedName>
</protein>
<gene>
    <name evidence="1" type="primary">mutS</name>
    <name type="ordered locus">ETA_26940</name>
</gene>
<dbReference type="EMBL" id="CU468135">
    <property type="protein sequence ID" value="CAO97740.1"/>
    <property type="molecule type" value="Genomic_DNA"/>
</dbReference>
<dbReference type="RefSeq" id="WP_012442398.1">
    <property type="nucleotide sequence ID" value="NC_010694.1"/>
</dbReference>
<dbReference type="SMR" id="B2VG22"/>
<dbReference type="STRING" id="465817.ETA_26940"/>
<dbReference type="KEGG" id="eta:ETA_26940"/>
<dbReference type="eggNOG" id="COG0249">
    <property type="taxonomic scope" value="Bacteria"/>
</dbReference>
<dbReference type="HOGENOM" id="CLU_002472_4_0_6"/>
<dbReference type="OrthoDB" id="9802448at2"/>
<dbReference type="Proteomes" id="UP000001726">
    <property type="component" value="Chromosome"/>
</dbReference>
<dbReference type="GO" id="GO:0005829">
    <property type="term" value="C:cytosol"/>
    <property type="evidence" value="ECO:0007669"/>
    <property type="project" value="TreeGrafter"/>
</dbReference>
<dbReference type="GO" id="GO:0005524">
    <property type="term" value="F:ATP binding"/>
    <property type="evidence" value="ECO:0007669"/>
    <property type="project" value="UniProtKB-UniRule"/>
</dbReference>
<dbReference type="GO" id="GO:0140664">
    <property type="term" value="F:ATP-dependent DNA damage sensor activity"/>
    <property type="evidence" value="ECO:0007669"/>
    <property type="project" value="InterPro"/>
</dbReference>
<dbReference type="GO" id="GO:0003684">
    <property type="term" value="F:damaged DNA binding"/>
    <property type="evidence" value="ECO:0007669"/>
    <property type="project" value="UniProtKB-UniRule"/>
</dbReference>
<dbReference type="GO" id="GO:0030983">
    <property type="term" value="F:mismatched DNA binding"/>
    <property type="evidence" value="ECO:0007669"/>
    <property type="project" value="InterPro"/>
</dbReference>
<dbReference type="GO" id="GO:0006298">
    <property type="term" value="P:mismatch repair"/>
    <property type="evidence" value="ECO:0007669"/>
    <property type="project" value="UniProtKB-UniRule"/>
</dbReference>
<dbReference type="CDD" id="cd03284">
    <property type="entry name" value="ABC_MutS1"/>
    <property type="match status" value="1"/>
</dbReference>
<dbReference type="FunFam" id="1.10.1420.10:FF:000002">
    <property type="entry name" value="DNA mismatch repair protein MutS"/>
    <property type="match status" value="1"/>
</dbReference>
<dbReference type="FunFam" id="3.30.420.110:FF:000001">
    <property type="entry name" value="DNA mismatch repair protein MutS"/>
    <property type="match status" value="1"/>
</dbReference>
<dbReference type="FunFam" id="3.40.1170.10:FF:000001">
    <property type="entry name" value="DNA mismatch repair protein MutS"/>
    <property type="match status" value="1"/>
</dbReference>
<dbReference type="FunFam" id="3.40.50.300:FF:000283">
    <property type="entry name" value="DNA mismatch repair protein MutS"/>
    <property type="match status" value="1"/>
</dbReference>
<dbReference type="Gene3D" id="1.10.1420.10">
    <property type="match status" value="2"/>
</dbReference>
<dbReference type="Gene3D" id="6.10.140.430">
    <property type="match status" value="1"/>
</dbReference>
<dbReference type="Gene3D" id="3.40.1170.10">
    <property type="entry name" value="DNA repair protein MutS, domain I"/>
    <property type="match status" value="1"/>
</dbReference>
<dbReference type="Gene3D" id="3.30.420.110">
    <property type="entry name" value="MutS, connector domain"/>
    <property type="match status" value="1"/>
</dbReference>
<dbReference type="Gene3D" id="3.40.50.300">
    <property type="entry name" value="P-loop containing nucleotide triphosphate hydrolases"/>
    <property type="match status" value="1"/>
</dbReference>
<dbReference type="HAMAP" id="MF_00096">
    <property type="entry name" value="MutS"/>
    <property type="match status" value="1"/>
</dbReference>
<dbReference type="InterPro" id="IPR005748">
    <property type="entry name" value="DNA_mismatch_repair_MutS"/>
</dbReference>
<dbReference type="InterPro" id="IPR007695">
    <property type="entry name" value="DNA_mismatch_repair_MutS-lik_N"/>
</dbReference>
<dbReference type="InterPro" id="IPR017261">
    <property type="entry name" value="DNA_mismatch_repair_MutS/MSH"/>
</dbReference>
<dbReference type="InterPro" id="IPR000432">
    <property type="entry name" value="DNA_mismatch_repair_MutS_C"/>
</dbReference>
<dbReference type="InterPro" id="IPR007861">
    <property type="entry name" value="DNA_mismatch_repair_MutS_clamp"/>
</dbReference>
<dbReference type="InterPro" id="IPR007696">
    <property type="entry name" value="DNA_mismatch_repair_MutS_core"/>
</dbReference>
<dbReference type="InterPro" id="IPR016151">
    <property type="entry name" value="DNA_mismatch_repair_MutS_N"/>
</dbReference>
<dbReference type="InterPro" id="IPR036187">
    <property type="entry name" value="DNA_mismatch_repair_MutS_sf"/>
</dbReference>
<dbReference type="InterPro" id="IPR007860">
    <property type="entry name" value="DNA_mmatch_repair_MutS_con_dom"/>
</dbReference>
<dbReference type="InterPro" id="IPR045076">
    <property type="entry name" value="MutS"/>
</dbReference>
<dbReference type="InterPro" id="IPR036678">
    <property type="entry name" value="MutS_con_dom_sf"/>
</dbReference>
<dbReference type="InterPro" id="IPR027417">
    <property type="entry name" value="P-loop_NTPase"/>
</dbReference>
<dbReference type="NCBIfam" id="TIGR01070">
    <property type="entry name" value="mutS1"/>
    <property type="match status" value="1"/>
</dbReference>
<dbReference type="NCBIfam" id="NF003810">
    <property type="entry name" value="PRK05399.1"/>
    <property type="match status" value="1"/>
</dbReference>
<dbReference type="PANTHER" id="PTHR11361:SF34">
    <property type="entry name" value="DNA MISMATCH REPAIR PROTEIN MSH1, MITOCHONDRIAL"/>
    <property type="match status" value="1"/>
</dbReference>
<dbReference type="PANTHER" id="PTHR11361">
    <property type="entry name" value="DNA MISMATCH REPAIR PROTEIN MUTS FAMILY MEMBER"/>
    <property type="match status" value="1"/>
</dbReference>
<dbReference type="Pfam" id="PF01624">
    <property type="entry name" value="MutS_I"/>
    <property type="match status" value="1"/>
</dbReference>
<dbReference type="Pfam" id="PF05188">
    <property type="entry name" value="MutS_II"/>
    <property type="match status" value="1"/>
</dbReference>
<dbReference type="Pfam" id="PF05192">
    <property type="entry name" value="MutS_III"/>
    <property type="match status" value="1"/>
</dbReference>
<dbReference type="Pfam" id="PF05190">
    <property type="entry name" value="MutS_IV"/>
    <property type="match status" value="1"/>
</dbReference>
<dbReference type="Pfam" id="PF00488">
    <property type="entry name" value="MutS_V"/>
    <property type="match status" value="1"/>
</dbReference>
<dbReference type="PIRSF" id="PIRSF037677">
    <property type="entry name" value="DNA_mis_repair_Msh6"/>
    <property type="match status" value="1"/>
</dbReference>
<dbReference type="SMART" id="SM00534">
    <property type="entry name" value="MUTSac"/>
    <property type="match status" value="1"/>
</dbReference>
<dbReference type="SMART" id="SM00533">
    <property type="entry name" value="MUTSd"/>
    <property type="match status" value="1"/>
</dbReference>
<dbReference type="SUPFAM" id="SSF55271">
    <property type="entry name" value="DNA repair protein MutS, domain I"/>
    <property type="match status" value="1"/>
</dbReference>
<dbReference type="SUPFAM" id="SSF53150">
    <property type="entry name" value="DNA repair protein MutS, domain II"/>
    <property type="match status" value="1"/>
</dbReference>
<dbReference type="SUPFAM" id="SSF48334">
    <property type="entry name" value="DNA repair protein MutS, domain III"/>
    <property type="match status" value="1"/>
</dbReference>
<dbReference type="SUPFAM" id="SSF52540">
    <property type="entry name" value="P-loop containing nucleoside triphosphate hydrolases"/>
    <property type="match status" value="1"/>
</dbReference>
<dbReference type="PROSITE" id="PS00486">
    <property type="entry name" value="DNA_MISMATCH_REPAIR_2"/>
    <property type="match status" value="1"/>
</dbReference>
<feature type="chain" id="PRO_1000093625" description="DNA mismatch repair protein MutS">
    <location>
        <begin position="1"/>
        <end position="853"/>
    </location>
</feature>
<feature type="binding site" evidence="1">
    <location>
        <begin position="616"/>
        <end position="623"/>
    </location>
    <ligand>
        <name>ATP</name>
        <dbReference type="ChEBI" id="CHEBI:30616"/>
    </ligand>
</feature>
<organism>
    <name type="scientific">Erwinia tasmaniensis (strain DSM 17950 / CFBP 7177 / CIP 109463 / NCPPB 4357 / Et1/99)</name>
    <dbReference type="NCBI Taxonomy" id="465817"/>
    <lineage>
        <taxon>Bacteria</taxon>
        <taxon>Pseudomonadati</taxon>
        <taxon>Pseudomonadota</taxon>
        <taxon>Gammaproteobacteria</taxon>
        <taxon>Enterobacterales</taxon>
        <taxon>Erwiniaceae</taxon>
        <taxon>Erwinia</taxon>
    </lineage>
</organism>
<sequence length="853" mass="94934">MSLNDNTNLSSHTPMMQQYLRLKAEHPEILLFYRMGDFYELFYDDAKRASQLLEISLTKRGSSAGEPIPMAGVPYHAVENYLAKLVHLGESVAICEQIGDPALSKGPVERKVVRIVTPGTISDEALLNERQDNLLAAIWQSTRGFGYATLDISSGRFRLAEPTDRETMAAELQRTNPAELLYPEDFAAMDLIENRRGLRRRALWEYELDTARQQLNLQFATRDLSGFGVEQAHHALRAAGCLLQYVKDTQRTSLPHIRSLTIERQQDGIIMDAATRRNLEITQNLAGGSDNTLASVLDKTVTPMGSRMLKRWLHMPLRNAQTIALRQQSIRTLQDLNDSLPPLLRQVGDLERILARLALRTARPRDLARMRHAFQQLPQLNNELADSDNAHLQTLRSQMGEFTELRELLEHAIVETPPVLVRDGGVIAPGYNQELDEWRALADGATDYLDRLEIREREKLGLDTLKVGFNGVHGYYIQVSRGQSHLVPIHYVRRQTLKNAERYIIPELKEYEDKVLTSKGKALSLEKALYEQLFDRLLPHLAALQDSAAALAELDVLTNLAERAWTLNYSCPTLSDKPGIKLTGGRHPVVEQVLKDPFIANPLSLSPQRRMLVVTGPNMGGKSTYMRQAALITLMAHIGSFVPAEQAIIGPIDRIFTRVGAADDLASGRSTFMVEMTETANILHNATEYSLVLMDEIGRGTSTYDGLSLAWACAESLANRIKAMTLFATHYFELTTLPEQIEGVANVHLDAVEHGDTIAFMHSVQEGAASKSYGLAVAALAGVPKDVIKRARQKLKELEALSGSAASTRADGSQLPLLVEETSPAVEALEALDPDSLSPRQALEWIYRLKSLV</sequence>
<reference key="1">
    <citation type="journal article" date="2008" name="Environ. Microbiol.">
        <title>The genome of Erwinia tasmaniensis strain Et1/99, a non-pathogenic bacterium in the genus Erwinia.</title>
        <authorList>
            <person name="Kube M."/>
            <person name="Migdoll A.M."/>
            <person name="Mueller I."/>
            <person name="Kuhl H."/>
            <person name="Beck A."/>
            <person name="Reinhardt R."/>
            <person name="Geider K."/>
        </authorList>
    </citation>
    <scope>NUCLEOTIDE SEQUENCE [LARGE SCALE GENOMIC DNA]</scope>
    <source>
        <strain>DSM 17950 / CFBP 7177 / CIP 109463 / NCPPB 4357 / Et1/99</strain>
    </source>
</reference>
<comment type="function">
    <text evidence="1">This protein is involved in the repair of mismatches in DNA. It is possible that it carries out the mismatch recognition step. This protein has a weak ATPase activity.</text>
</comment>
<comment type="similarity">
    <text evidence="1">Belongs to the DNA mismatch repair MutS family.</text>
</comment>
<evidence type="ECO:0000255" key="1">
    <source>
        <dbReference type="HAMAP-Rule" id="MF_00096"/>
    </source>
</evidence>
<keyword id="KW-0067">ATP-binding</keyword>
<keyword id="KW-0227">DNA damage</keyword>
<keyword id="KW-0234">DNA repair</keyword>
<keyword id="KW-0238">DNA-binding</keyword>
<keyword id="KW-0547">Nucleotide-binding</keyword>
<keyword id="KW-1185">Reference proteome</keyword>
<accession>B2VG22</accession>
<proteinExistence type="inferred from homology"/>